<proteinExistence type="evidence at transcript level"/>
<feature type="chain" id="PRO_0000063762" description="Vimentin-1/2">
    <location>
        <begin position="1"/>
        <end position="458"/>
    </location>
</feature>
<feature type="domain" description="IF rod" evidence="2">
    <location>
        <begin position="96"/>
        <end position="404"/>
    </location>
</feature>
<feature type="region of interest" description="Head">
    <location>
        <begin position="1"/>
        <end position="88"/>
    </location>
</feature>
<feature type="region of interest" description="Disordered" evidence="3">
    <location>
        <begin position="1"/>
        <end position="27"/>
    </location>
</feature>
<feature type="region of interest" description="Coil 1A">
    <location>
        <begin position="89"/>
        <end position="124"/>
    </location>
</feature>
<feature type="region of interest" description="Linker 1">
    <location>
        <begin position="125"/>
        <end position="146"/>
    </location>
</feature>
<feature type="region of interest" description="Coil 1B">
    <location>
        <begin position="147"/>
        <end position="238"/>
    </location>
</feature>
<feature type="region of interest" description="Linker 12">
    <location>
        <begin position="239"/>
        <end position="261"/>
    </location>
</feature>
<feature type="region of interest" description="Coil 2">
    <location>
        <begin position="262"/>
        <end position="400"/>
    </location>
</feature>
<feature type="region of interest" description="Tail">
    <location>
        <begin position="401"/>
        <end position="458"/>
    </location>
</feature>
<feature type="site" description="Stutter" evidence="1">
    <location>
        <position position="344"/>
    </location>
</feature>
<feature type="sequence variant" description="In vim2.">
    <original>S</original>
    <variation>SS</variation>
    <location>
        <position position="43"/>
    </location>
</feature>
<accession>P24789</accession>
<accession>Q5U486</accession>
<accession>Q68EZ6</accession>
<protein>
    <recommendedName>
        <fullName>Vimentin-1/2</fullName>
    </recommendedName>
</protein>
<organism>
    <name type="scientific">Xenopus laevis</name>
    <name type="common">African clawed frog</name>
    <dbReference type="NCBI Taxonomy" id="8355"/>
    <lineage>
        <taxon>Eukaryota</taxon>
        <taxon>Metazoa</taxon>
        <taxon>Chordata</taxon>
        <taxon>Craniata</taxon>
        <taxon>Vertebrata</taxon>
        <taxon>Euteleostomi</taxon>
        <taxon>Amphibia</taxon>
        <taxon>Batrachia</taxon>
        <taxon>Anura</taxon>
        <taxon>Pipoidea</taxon>
        <taxon>Pipidae</taxon>
        <taxon>Xenopodinae</taxon>
        <taxon>Xenopus</taxon>
        <taxon>Xenopus</taxon>
    </lineage>
</organism>
<name>VIM1_XENLA</name>
<keyword id="KW-0175">Coiled coil</keyword>
<keyword id="KW-0403">Intermediate filament</keyword>
<keyword id="KW-1185">Reference proteome</keyword>
<dbReference type="EMBL" id="X16843">
    <property type="protein sequence ID" value="CAA34741.1"/>
    <property type="molecule type" value="mRNA"/>
</dbReference>
<dbReference type="EMBL" id="BC080051">
    <property type="protein sequence ID" value="AAH80051.1"/>
    <property type="molecule type" value="mRNA"/>
</dbReference>
<dbReference type="EMBL" id="BC085223">
    <property type="protein sequence ID" value="AAH85223.1"/>
    <property type="molecule type" value="mRNA"/>
</dbReference>
<dbReference type="PIR" id="A43549">
    <property type="entry name" value="A43549"/>
</dbReference>
<dbReference type="RefSeq" id="NP_001080908.1">
    <property type="nucleotide sequence ID" value="NM_001087439.1"/>
</dbReference>
<dbReference type="SMR" id="P24789"/>
<dbReference type="BioGRID" id="98845">
    <property type="interactions" value="1"/>
</dbReference>
<dbReference type="IntAct" id="P24789">
    <property type="interactions" value="1"/>
</dbReference>
<dbReference type="DNASU" id="386601"/>
<dbReference type="GeneID" id="386601"/>
<dbReference type="KEGG" id="xla:386601"/>
<dbReference type="AGR" id="Xenbase:XB-GENE-866225"/>
<dbReference type="CTD" id="386601"/>
<dbReference type="Xenbase" id="XB-GENE-866225">
    <property type="gene designation" value="vim.L"/>
</dbReference>
<dbReference type="OMA" id="GGMYATK"/>
<dbReference type="OrthoDB" id="2441647at2759"/>
<dbReference type="Proteomes" id="UP000186698">
    <property type="component" value="Chromosome 6L"/>
</dbReference>
<dbReference type="Bgee" id="386601">
    <property type="expression patterns" value="Expressed in lung and 19 other cell types or tissues"/>
</dbReference>
<dbReference type="GO" id="GO:0030424">
    <property type="term" value="C:axon"/>
    <property type="evidence" value="ECO:0000318"/>
    <property type="project" value="GO_Central"/>
</dbReference>
<dbReference type="GO" id="GO:0005737">
    <property type="term" value="C:cytoplasm"/>
    <property type="evidence" value="ECO:0007669"/>
    <property type="project" value="TreeGrafter"/>
</dbReference>
<dbReference type="GO" id="GO:0005882">
    <property type="term" value="C:intermediate filament"/>
    <property type="evidence" value="ECO:0000318"/>
    <property type="project" value="GO_Central"/>
</dbReference>
<dbReference type="GO" id="GO:0005886">
    <property type="term" value="C:plasma membrane"/>
    <property type="evidence" value="ECO:0000318"/>
    <property type="project" value="GO_Central"/>
</dbReference>
<dbReference type="GO" id="GO:0005200">
    <property type="term" value="F:structural constituent of cytoskeleton"/>
    <property type="evidence" value="ECO:0000318"/>
    <property type="project" value="GO_Central"/>
</dbReference>
<dbReference type="GO" id="GO:0045109">
    <property type="term" value="P:intermediate filament organization"/>
    <property type="evidence" value="ECO:0000318"/>
    <property type="project" value="GO_Central"/>
</dbReference>
<dbReference type="FunFam" id="1.20.5.1160:FF:000001">
    <property type="entry name" value="Keratin type II"/>
    <property type="match status" value="1"/>
</dbReference>
<dbReference type="FunFam" id="1.20.5.170:FF:000002">
    <property type="entry name" value="Type I keratin KA11"/>
    <property type="match status" value="1"/>
</dbReference>
<dbReference type="FunFam" id="1.20.5.500:FF:000001">
    <property type="entry name" value="Type II keratin 23"/>
    <property type="match status" value="1"/>
</dbReference>
<dbReference type="Gene3D" id="1.20.5.170">
    <property type="match status" value="1"/>
</dbReference>
<dbReference type="Gene3D" id="1.20.5.500">
    <property type="entry name" value="Single helix bin"/>
    <property type="match status" value="1"/>
</dbReference>
<dbReference type="Gene3D" id="1.20.5.1160">
    <property type="entry name" value="Vasodilator-stimulated phosphoprotein"/>
    <property type="match status" value="1"/>
</dbReference>
<dbReference type="InterPro" id="IPR018039">
    <property type="entry name" value="IF_conserved"/>
</dbReference>
<dbReference type="InterPro" id="IPR039008">
    <property type="entry name" value="IF_rod_dom"/>
</dbReference>
<dbReference type="InterPro" id="IPR006821">
    <property type="entry name" value="Intermed_filament_DNA-bd"/>
</dbReference>
<dbReference type="InterPro" id="IPR050405">
    <property type="entry name" value="Intermediate_filament"/>
</dbReference>
<dbReference type="PANTHER" id="PTHR45652">
    <property type="entry name" value="GLIAL FIBRILLARY ACIDIC PROTEIN"/>
    <property type="match status" value="1"/>
</dbReference>
<dbReference type="PANTHER" id="PTHR45652:SF5">
    <property type="entry name" value="VIMENTIN"/>
    <property type="match status" value="1"/>
</dbReference>
<dbReference type="Pfam" id="PF00038">
    <property type="entry name" value="Filament"/>
    <property type="match status" value="1"/>
</dbReference>
<dbReference type="Pfam" id="PF04732">
    <property type="entry name" value="Filament_head"/>
    <property type="match status" value="1"/>
</dbReference>
<dbReference type="SMART" id="SM01391">
    <property type="entry name" value="Filament"/>
    <property type="match status" value="1"/>
</dbReference>
<dbReference type="SUPFAM" id="SSF64593">
    <property type="entry name" value="Intermediate filament protein, coiled coil region"/>
    <property type="match status" value="2"/>
</dbReference>
<dbReference type="PROSITE" id="PS00226">
    <property type="entry name" value="IF_ROD_1"/>
    <property type="match status" value="1"/>
</dbReference>
<dbReference type="PROSITE" id="PS51842">
    <property type="entry name" value="IF_ROD_2"/>
    <property type="match status" value="1"/>
</dbReference>
<reference key="1">
    <citation type="journal article" date="1989" name="Development">
        <title>Expression of intermediate filament proteins during development of Xenopus laevis. I. cDNA clones encoding different forms of vimentin.</title>
        <authorList>
            <person name="Herrmann H."/>
            <person name="Fouquet B."/>
            <person name="Franke W.W."/>
        </authorList>
    </citation>
    <scope>NUCLEOTIDE SEQUENCE [MRNA]</scope>
    <source>
        <tissue>Embryo</tissue>
    </source>
</reference>
<reference key="2">
    <citation type="submission" date="2004-08" db="EMBL/GenBank/DDBJ databases">
        <authorList>
            <consortium name="NIH - Xenopus Gene Collection (XGC) project"/>
        </authorList>
    </citation>
    <scope>NUCLEOTIDE SEQUENCE [LARGE SCALE MRNA] (VIM1 AND VIM2)</scope>
    <source>
        <tissue>Kidney</tissue>
        <tissue>Spleen</tissue>
    </source>
</reference>
<comment type="function">
    <text>Vimentins are class-III intermediate filaments found in various non-epithelial cells, especially mesenchymal cells. Vimentin is attached to the nucleus, endoplasmic reticulum, and mitochondria, either laterally or terminally.</text>
</comment>
<comment type="subunit">
    <text>Homomer.</text>
</comment>
<comment type="PTM">
    <text>One of the most prominent phosphoproteins in various cells of mesenchymal origin. Phosphorylation is enhanced during cell division, at which time vimentin filaments are significantly reorganized.</text>
</comment>
<comment type="similarity">
    <text evidence="2">Belongs to the intermediate filament family.</text>
</comment>
<sequence length="458" mass="52845">MATTKSSYRRIFGGNPRSSSSGNRYATSSTRYTLGSAMRPSTSSRMVYSTSSSPAVFKSSSVRLRSSLPPARMADSVDFALADAVNLEFKANRTNEKAEMIELNDRFANFIDKVRFLEQQNKILVAELEQLKGKGTSRIGDLYEEEMRELRRQLDQATNDKARVEVDRDNLADDLQRLREKLQDEMIQKEEAEGNLQSFRQDVDNASLARIDLERKVESLQEEIAFLKKLHDEEIRELQLQIQESHIQVDMDVSKPDLTAALRDVRQQYENVAAKNLSDAEEWYKSKFADLSEAANRNNDALRQAKQETSDFRRQIQTLTCEIDAMKGSNESYERQMREMEENFAIEAANYQDTIQRLQEEIQNMKEEMARHLREYQDLLNVKMALDIEIATYRKLLEGEESRISLPVHSFSTMSLRETNLDSHPAETHSKRTVLIKTVETRDGQVVNESSQHHDDFE</sequence>
<evidence type="ECO:0000255" key="1"/>
<evidence type="ECO:0000255" key="2">
    <source>
        <dbReference type="PROSITE-ProRule" id="PRU01188"/>
    </source>
</evidence>
<evidence type="ECO:0000256" key="3">
    <source>
        <dbReference type="SAM" id="MobiDB-lite"/>
    </source>
</evidence>
<gene>
    <name type="primary">vim1</name>
</gene>
<gene>
    <name type="primary">vim2</name>
</gene>